<evidence type="ECO:0000255" key="1">
    <source>
        <dbReference type="HAMAP-Rule" id="MF_01598"/>
    </source>
</evidence>
<reference key="1">
    <citation type="journal article" date="2005" name="Nucleic Acids Res.">
        <title>Genome dynamics and diversity of Shigella species, the etiologic agents of bacillary dysentery.</title>
        <authorList>
            <person name="Yang F."/>
            <person name="Yang J."/>
            <person name="Zhang X."/>
            <person name="Chen L."/>
            <person name="Jiang Y."/>
            <person name="Yan Y."/>
            <person name="Tang X."/>
            <person name="Wang J."/>
            <person name="Xiong Z."/>
            <person name="Dong J."/>
            <person name="Xue Y."/>
            <person name="Zhu Y."/>
            <person name="Xu X."/>
            <person name="Sun L."/>
            <person name="Chen S."/>
            <person name="Nie H."/>
            <person name="Peng J."/>
            <person name="Xu J."/>
            <person name="Wang Y."/>
            <person name="Yuan Z."/>
            <person name="Wen Y."/>
            <person name="Yao Z."/>
            <person name="Shen Y."/>
            <person name="Qiang B."/>
            <person name="Hou Y."/>
            <person name="Yu J."/>
            <person name="Jin Q."/>
        </authorList>
    </citation>
    <scope>NUCLEOTIDE SEQUENCE [LARGE SCALE GENOMIC DNA]</scope>
    <source>
        <strain>Sb227</strain>
    </source>
</reference>
<accession>Q320V6</accession>
<comment type="function">
    <text evidence="1">Catalyzes the excretion of spermidine.</text>
</comment>
<comment type="subunit">
    <text evidence="1">Forms a complex with MdtI.</text>
</comment>
<comment type="subcellular location">
    <subcellularLocation>
        <location evidence="1">Cell inner membrane</location>
        <topology evidence="1">Multi-pass membrane protein</topology>
    </subcellularLocation>
</comment>
<comment type="similarity">
    <text evidence="1">Belongs to the drug/metabolite transporter (DMT) superfamily. Small multidrug resistance (SMR) (TC 2.A.7.1) family. MdtJ subfamily.</text>
</comment>
<sequence length="121" mass="13115">MYIYWILLGLAIATEITGTLSMKWASVSEGNGGFILMLVMISLSYIFLSFAVKKIALGVAYALWEGIGILFITLFSVLLFDESLSLMKIAGLTTLVAGIVLIKSGTRKARKPELEVNHGAV</sequence>
<dbReference type="EMBL" id="CP000036">
    <property type="protein sequence ID" value="ABB66152.1"/>
    <property type="molecule type" value="Genomic_DNA"/>
</dbReference>
<dbReference type="RefSeq" id="WP_000276149.1">
    <property type="nucleotide sequence ID" value="NC_007613.1"/>
</dbReference>
<dbReference type="SMR" id="Q320V6"/>
<dbReference type="GeneID" id="93775748"/>
<dbReference type="KEGG" id="sbo:SBO_1536"/>
<dbReference type="HOGENOM" id="CLU_133067_0_0_6"/>
<dbReference type="Proteomes" id="UP000007067">
    <property type="component" value="Chromosome"/>
</dbReference>
<dbReference type="GO" id="GO:0005886">
    <property type="term" value="C:plasma membrane"/>
    <property type="evidence" value="ECO:0007669"/>
    <property type="project" value="UniProtKB-SubCell"/>
</dbReference>
<dbReference type="GO" id="GO:0015199">
    <property type="term" value="F:amino-acid betaine transmembrane transporter activity"/>
    <property type="evidence" value="ECO:0007669"/>
    <property type="project" value="TreeGrafter"/>
</dbReference>
<dbReference type="GO" id="GO:0015297">
    <property type="term" value="F:antiporter activity"/>
    <property type="evidence" value="ECO:0007669"/>
    <property type="project" value="TreeGrafter"/>
</dbReference>
<dbReference type="GO" id="GO:0015220">
    <property type="term" value="F:choline transmembrane transporter activity"/>
    <property type="evidence" value="ECO:0007669"/>
    <property type="project" value="TreeGrafter"/>
</dbReference>
<dbReference type="GO" id="GO:0015606">
    <property type="term" value="F:spermidine transmembrane transporter activity"/>
    <property type="evidence" value="ECO:0007669"/>
    <property type="project" value="UniProtKB-UniRule"/>
</dbReference>
<dbReference type="GO" id="GO:0031460">
    <property type="term" value="P:glycine betaine transport"/>
    <property type="evidence" value="ECO:0007669"/>
    <property type="project" value="TreeGrafter"/>
</dbReference>
<dbReference type="FunFam" id="1.10.3730.20:FF:000001">
    <property type="entry name" value="Quaternary ammonium compound resistance transporter SugE"/>
    <property type="match status" value="1"/>
</dbReference>
<dbReference type="Gene3D" id="1.10.3730.20">
    <property type="match status" value="1"/>
</dbReference>
<dbReference type="HAMAP" id="MF_01598">
    <property type="entry name" value="MdtJ"/>
    <property type="match status" value="1"/>
</dbReference>
<dbReference type="InterPro" id="IPR000390">
    <property type="entry name" value="Small_drug/metabolite_transptr"/>
</dbReference>
<dbReference type="InterPro" id="IPR045324">
    <property type="entry name" value="Small_multidrug_res"/>
</dbReference>
<dbReference type="InterPro" id="IPR023740">
    <property type="entry name" value="Spermidine_export_MdtJ"/>
</dbReference>
<dbReference type="NCBIfam" id="NF007767">
    <property type="entry name" value="PRK10452.1"/>
    <property type="match status" value="1"/>
</dbReference>
<dbReference type="PANTHER" id="PTHR30561">
    <property type="entry name" value="SMR FAMILY PROTON-DEPENDENT DRUG EFFLUX TRANSPORTER SUGE"/>
    <property type="match status" value="1"/>
</dbReference>
<dbReference type="PANTHER" id="PTHR30561:SF2">
    <property type="entry name" value="SPERMIDINE EXPORT PROTEIN MDTJ"/>
    <property type="match status" value="1"/>
</dbReference>
<dbReference type="Pfam" id="PF00893">
    <property type="entry name" value="Multi_Drug_Res"/>
    <property type="match status" value="1"/>
</dbReference>
<dbReference type="SUPFAM" id="SSF103481">
    <property type="entry name" value="Multidrug resistance efflux transporter EmrE"/>
    <property type="match status" value="1"/>
</dbReference>
<gene>
    <name evidence="1" type="primary">mdtJ</name>
    <name type="ordered locus">SBO_1536</name>
</gene>
<organism>
    <name type="scientific">Shigella boydii serotype 4 (strain Sb227)</name>
    <dbReference type="NCBI Taxonomy" id="300268"/>
    <lineage>
        <taxon>Bacteria</taxon>
        <taxon>Pseudomonadati</taxon>
        <taxon>Pseudomonadota</taxon>
        <taxon>Gammaproteobacteria</taxon>
        <taxon>Enterobacterales</taxon>
        <taxon>Enterobacteriaceae</taxon>
        <taxon>Shigella</taxon>
    </lineage>
</organism>
<name>MDTJ_SHIBS</name>
<protein>
    <recommendedName>
        <fullName evidence="1">Spermidine export protein MdtJ</fullName>
    </recommendedName>
</protein>
<proteinExistence type="inferred from homology"/>
<feature type="chain" id="PRO_0000331180" description="Spermidine export protein MdtJ">
    <location>
        <begin position="1"/>
        <end position="121"/>
    </location>
</feature>
<feature type="transmembrane region" description="Helical" evidence="1">
    <location>
        <begin position="1"/>
        <end position="21"/>
    </location>
</feature>
<feature type="transmembrane region" description="Helical" evidence="1">
    <location>
        <begin position="32"/>
        <end position="52"/>
    </location>
</feature>
<feature type="transmembrane region" description="Helical" evidence="1">
    <location>
        <begin position="55"/>
        <end position="75"/>
    </location>
</feature>
<feature type="transmembrane region" description="Helical" evidence="1">
    <location>
        <begin position="82"/>
        <end position="102"/>
    </location>
</feature>
<keyword id="KW-0997">Cell inner membrane</keyword>
<keyword id="KW-1003">Cell membrane</keyword>
<keyword id="KW-0472">Membrane</keyword>
<keyword id="KW-0812">Transmembrane</keyword>
<keyword id="KW-1133">Transmembrane helix</keyword>
<keyword id="KW-0813">Transport</keyword>